<sequence>MTTNTGKVTQIIGPVIDITFPIEAMSSVNIYDAVVIEDKTEKLSVTCEIQQLIGSQSVRTVSMSSTDRIKRGMDVVQTGTAIAVPVGKSTLRRIFNVLGQPIDNLGDVKNEETRPIHRSAPEFVDLDIRLEIFETGIKVIDLLAPYRRGGKVGLFGGAGVGKTVLIMELINNIAKAHGGVSVFAGVGERTREGNDLYAEMKESGVIVEDNLLESKVTLVYGQMNEPPGARMRVGLAALTMAEFFRDSSKQDVLLFIDNVFRFVQAGSEVSALLGRMPSAVGYQPTLATEMGGLQERITSTKDGSITSIQAVYVPADDLTDPAAATTFAHLDATTVLSRGLASKGIYPAVDPLGSTSTMLQPWIVGDSHYECAQKVKQTLQRYKELQDIIAILGLEELSEEDRLTVDRARKIERFLSQPFFVAEIFTGLAGKYVGLNETIFGFNKILSGDLDSYNEQAFYLVGNLTDAEGKMKTISEN</sequence>
<name>ATPB_BIGNA</name>
<protein>
    <recommendedName>
        <fullName evidence="1">ATP synthase subunit beta, chloroplastic</fullName>
        <ecNumber evidence="1">7.1.2.2</ecNumber>
    </recommendedName>
    <alternativeName>
        <fullName evidence="1">ATP synthase F1 sector subunit beta</fullName>
    </alternativeName>
    <alternativeName>
        <fullName evidence="1">F-ATPase subunit beta</fullName>
    </alternativeName>
</protein>
<accession>Q06J29</accession>
<evidence type="ECO:0000255" key="1">
    <source>
        <dbReference type="HAMAP-Rule" id="MF_01347"/>
    </source>
</evidence>
<keyword id="KW-0066">ATP synthesis</keyword>
<keyword id="KW-0067">ATP-binding</keyword>
<keyword id="KW-0139">CF(1)</keyword>
<keyword id="KW-0150">Chloroplast</keyword>
<keyword id="KW-0375">Hydrogen ion transport</keyword>
<keyword id="KW-0406">Ion transport</keyword>
<keyword id="KW-0472">Membrane</keyword>
<keyword id="KW-0547">Nucleotide-binding</keyword>
<keyword id="KW-0934">Plastid</keyword>
<keyword id="KW-0793">Thylakoid</keyword>
<keyword id="KW-1278">Translocase</keyword>
<keyword id="KW-0813">Transport</keyword>
<reference key="1">
    <citation type="journal article" date="2007" name="Mol. Biol. Evol.">
        <title>The complete chloroplast genome of the chlorarachniophyte Bigelowiella natans: evidence for independent origins of chlorarachniophyte and euglenid secondary endosymbionts.</title>
        <authorList>
            <person name="Rogers M.B."/>
            <person name="Gilson P.R."/>
            <person name="Su V."/>
            <person name="McFadden G.I."/>
            <person name="Keeling P.J."/>
        </authorList>
    </citation>
    <scope>NUCLEOTIDE SEQUENCE [LARGE SCALE GENOMIC DNA]</scope>
</reference>
<geneLocation type="chloroplast"/>
<feature type="chain" id="PRO_0000296337" description="ATP synthase subunit beta, chloroplastic">
    <location>
        <begin position="1"/>
        <end position="477"/>
    </location>
</feature>
<feature type="binding site" evidence="1">
    <location>
        <begin position="156"/>
        <end position="163"/>
    </location>
    <ligand>
        <name>ATP</name>
        <dbReference type="ChEBI" id="CHEBI:30616"/>
    </ligand>
</feature>
<comment type="function">
    <text evidence="1">Produces ATP from ADP in the presence of a proton gradient across the membrane. The catalytic sites are hosted primarily by the beta subunits.</text>
</comment>
<comment type="catalytic activity">
    <reaction evidence="1">
        <text>ATP + H2O + 4 H(+)(in) = ADP + phosphate + 5 H(+)(out)</text>
        <dbReference type="Rhea" id="RHEA:57720"/>
        <dbReference type="ChEBI" id="CHEBI:15377"/>
        <dbReference type="ChEBI" id="CHEBI:15378"/>
        <dbReference type="ChEBI" id="CHEBI:30616"/>
        <dbReference type="ChEBI" id="CHEBI:43474"/>
        <dbReference type="ChEBI" id="CHEBI:456216"/>
        <dbReference type="EC" id="7.1.2.2"/>
    </reaction>
</comment>
<comment type="subunit">
    <text evidence="1">F-type ATPases have 2 components, CF(1) - the catalytic core - and CF(0) - the membrane proton channel. CF(1) has five subunits: alpha(3), beta(3), gamma(1), delta(1), epsilon(1). CF(0) has four main subunits: a(1), b(1), b'(1) and c(9-12).</text>
</comment>
<comment type="subcellular location">
    <subcellularLocation>
        <location evidence="1">Plastid</location>
        <location evidence="1">Chloroplast thylakoid membrane</location>
        <topology evidence="1">Peripheral membrane protein</topology>
    </subcellularLocation>
</comment>
<comment type="similarity">
    <text evidence="1">Belongs to the ATPase alpha/beta chains family.</text>
</comment>
<gene>
    <name evidence="1" type="primary">atpB</name>
</gene>
<organism>
    <name type="scientific">Bigelowiella natans</name>
    <name type="common">Pedinomonas minutissima</name>
    <name type="synonym">Chlorarachnion sp. (strain CCMP621)</name>
    <dbReference type="NCBI Taxonomy" id="227086"/>
    <lineage>
        <taxon>Eukaryota</taxon>
        <taxon>Sar</taxon>
        <taxon>Rhizaria</taxon>
        <taxon>Cercozoa</taxon>
        <taxon>Chlorarachniophyceae</taxon>
        <taxon>Bigelowiella</taxon>
    </lineage>
</organism>
<dbReference type="EC" id="7.1.2.2" evidence="1"/>
<dbReference type="EMBL" id="DQ851108">
    <property type="protein sequence ID" value="ABG91430.1"/>
    <property type="molecule type" value="Genomic_DNA"/>
</dbReference>
<dbReference type="RefSeq" id="YP_778598.1">
    <property type="nucleotide sequence ID" value="NC_008408.1"/>
</dbReference>
<dbReference type="SMR" id="Q06J29"/>
<dbReference type="GeneID" id="4353015"/>
<dbReference type="GO" id="GO:0009535">
    <property type="term" value="C:chloroplast thylakoid membrane"/>
    <property type="evidence" value="ECO:0007669"/>
    <property type="project" value="UniProtKB-SubCell"/>
</dbReference>
<dbReference type="GO" id="GO:0005739">
    <property type="term" value="C:mitochondrion"/>
    <property type="evidence" value="ECO:0007669"/>
    <property type="project" value="GOC"/>
</dbReference>
<dbReference type="GO" id="GO:0045259">
    <property type="term" value="C:proton-transporting ATP synthase complex"/>
    <property type="evidence" value="ECO:0007669"/>
    <property type="project" value="UniProtKB-KW"/>
</dbReference>
<dbReference type="GO" id="GO:0005524">
    <property type="term" value="F:ATP binding"/>
    <property type="evidence" value="ECO:0007669"/>
    <property type="project" value="UniProtKB-UniRule"/>
</dbReference>
<dbReference type="GO" id="GO:0016887">
    <property type="term" value="F:ATP hydrolysis activity"/>
    <property type="evidence" value="ECO:0007669"/>
    <property type="project" value="InterPro"/>
</dbReference>
<dbReference type="GO" id="GO:0046933">
    <property type="term" value="F:proton-transporting ATP synthase activity, rotational mechanism"/>
    <property type="evidence" value="ECO:0007669"/>
    <property type="project" value="UniProtKB-UniRule"/>
</dbReference>
<dbReference type="GO" id="GO:0042776">
    <property type="term" value="P:proton motive force-driven mitochondrial ATP synthesis"/>
    <property type="evidence" value="ECO:0007669"/>
    <property type="project" value="TreeGrafter"/>
</dbReference>
<dbReference type="CDD" id="cd18110">
    <property type="entry name" value="ATP-synt_F1_beta_C"/>
    <property type="match status" value="1"/>
</dbReference>
<dbReference type="CDD" id="cd18115">
    <property type="entry name" value="ATP-synt_F1_beta_N"/>
    <property type="match status" value="1"/>
</dbReference>
<dbReference type="CDD" id="cd01133">
    <property type="entry name" value="F1-ATPase_beta_CD"/>
    <property type="match status" value="1"/>
</dbReference>
<dbReference type="FunFam" id="1.10.1140.10:FF:000001">
    <property type="entry name" value="ATP synthase subunit beta"/>
    <property type="match status" value="1"/>
</dbReference>
<dbReference type="FunFam" id="3.40.50.12240:FF:000006">
    <property type="entry name" value="ATP synthase subunit beta"/>
    <property type="match status" value="1"/>
</dbReference>
<dbReference type="FunFam" id="3.40.50.300:FF:000026">
    <property type="entry name" value="ATP synthase subunit beta"/>
    <property type="match status" value="1"/>
</dbReference>
<dbReference type="Gene3D" id="2.40.10.170">
    <property type="match status" value="1"/>
</dbReference>
<dbReference type="Gene3D" id="1.10.1140.10">
    <property type="entry name" value="Bovine Mitochondrial F1-atpase, Atp Synthase Beta Chain, Chain D, domain 3"/>
    <property type="match status" value="1"/>
</dbReference>
<dbReference type="Gene3D" id="3.40.50.300">
    <property type="entry name" value="P-loop containing nucleotide triphosphate hydrolases"/>
    <property type="match status" value="1"/>
</dbReference>
<dbReference type="HAMAP" id="MF_01347">
    <property type="entry name" value="ATP_synth_beta_bact"/>
    <property type="match status" value="1"/>
</dbReference>
<dbReference type="InterPro" id="IPR003593">
    <property type="entry name" value="AAA+_ATPase"/>
</dbReference>
<dbReference type="InterPro" id="IPR055190">
    <property type="entry name" value="ATP-synt_VA_C"/>
</dbReference>
<dbReference type="InterPro" id="IPR005722">
    <property type="entry name" value="ATP_synth_F1_bsu"/>
</dbReference>
<dbReference type="InterPro" id="IPR020003">
    <property type="entry name" value="ATPase_a/bsu_AS"/>
</dbReference>
<dbReference type="InterPro" id="IPR050053">
    <property type="entry name" value="ATPase_alpha/beta_chains"/>
</dbReference>
<dbReference type="InterPro" id="IPR004100">
    <property type="entry name" value="ATPase_F1/V1/A1_a/bsu_N"/>
</dbReference>
<dbReference type="InterPro" id="IPR036121">
    <property type="entry name" value="ATPase_F1/V1/A1_a/bsu_N_sf"/>
</dbReference>
<dbReference type="InterPro" id="IPR000194">
    <property type="entry name" value="ATPase_F1/V1/A1_a/bsu_nucl-bd"/>
</dbReference>
<dbReference type="InterPro" id="IPR024034">
    <property type="entry name" value="ATPase_F1/V1_b/a_C"/>
</dbReference>
<dbReference type="InterPro" id="IPR027417">
    <property type="entry name" value="P-loop_NTPase"/>
</dbReference>
<dbReference type="NCBIfam" id="TIGR01039">
    <property type="entry name" value="atpD"/>
    <property type="match status" value="1"/>
</dbReference>
<dbReference type="PANTHER" id="PTHR15184">
    <property type="entry name" value="ATP SYNTHASE"/>
    <property type="match status" value="1"/>
</dbReference>
<dbReference type="PANTHER" id="PTHR15184:SF71">
    <property type="entry name" value="ATP SYNTHASE SUBUNIT BETA, MITOCHONDRIAL"/>
    <property type="match status" value="1"/>
</dbReference>
<dbReference type="Pfam" id="PF00006">
    <property type="entry name" value="ATP-synt_ab"/>
    <property type="match status" value="1"/>
</dbReference>
<dbReference type="Pfam" id="PF02874">
    <property type="entry name" value="ATP-synt_ab_N"/>
    <property type="match status" value="1"/>
</dbReference>
<dbReference type="Pfam" id="PF22919">
    <property type="entry name" value="ATP-synt_VA_C"/>
    <property type="match status" value="1"/>
</dbReference>
<dbReference type="SMART" id="SM00382">
    <property type="entry name" value="AAA"/>
    <property type="match status" value="1"/>
</dbReference>
<dbReference type="SUPFAM" id="SSF47917">
    <property type="entry name" value="C-terminal domain of alpha and beta subunits of F1 ATP synthase"/>
    <property type="match status" value="1"/>
</dbReference>
<dbReference type="SUPFAM" id="SSF50615">
    <property type="entry name" value="N-terminal domain of alpha and beta subunits of F1 ATP synthase"/>
    <property type="match status" value="1"/>
</dbReference>
<dbReference type="SUPFAM" id="SSF52540">
    <property type="entry name" value="P-loop containing nucleoside triphosphate hydrolases"/>
    <property type="match status" value="1"/>
</dbReference>
<dbReference type="PROSITE" id="PS00152">
    <property type="entry name" value="ATPASE_ALPHA_BETA"/>
    <property type="match status" value="1"/>
</dbReference>
<proteinExistence type="inferred from homology"/>